<comment type="function">
    <text evidence="4">Snake venom phospholipase A2 (PLA2) that induces myotoxicity and local edema in mice (PubMed:25365526). In addition, it causes neuromuscular blockade in avian neuromuscular preparations with a significant direct action on skeletal muscle function (PubMed:25365526). Myotoxic action is exerted by both enzymatic and non-enzymatic mechanisms (PubMed:25365526). PLA2 catalyzes the calcium-dependent hydrolysis of the 2-acyl groups in 3-sn-phosphoglycerides (PubMed:25365526).</text>
</comment>
<comment type="catalytic activity">
    <reaction evidence="4">
        <text>a 1,2-diacyl-sn-glycero-3-phosphocholine + H2O = a 1-acyl-sn-glycero-3-phosphocholine + a fatty acid + H(+)</text>
        <dbReference type="Rhea" id="RHEA:15801"/>
        <dbReference type="ChEBI" id="CHEBI:15377"/>
        <dbReference type="ChEBI" id="CHEBI:15378"/>
        <dbReference type="ChEBI" id="CHEBI:28868"/>
        <dbReference type="ChEBI" id="CHEBI:57643"/>
        <dbReference type="ChEBI" id="CHEBI:58168"/>
        <dbReference type="EC" id="3.1.1.4"/>
    </reaction>
</comment>
<comment type="cofactor">
    <cofactor evidence="4">
        <name>Ca(2+)</name>
        <dbReference type="ChEBI" id="CHEBI:29108"/>
    </cofactor>
    <text evidence="1">Binds 1 Ca(2+) ion.</text>
</comment>
<comment type="activity regulation">
    <text evidence="4">P-bromophenacyl bromide (BPB) completely inhibits the catalytic and edematogenic activities (PubMed:25365526). Enzymatic activity is also diminished by EDTA, heparin and crotapotins F2 and F3 from C.d.collilineatus (PubMed:25365526). Inhibited by divalent cations different from calcium ions (cadmium, magnesium, manganese, zinc), since they act as competitive antagonists of this cofactor (PubMed:25365526).</text>
</comment>
<comment type="biophysicochemical properties">
    <kinetics>
        <Vmax evidence="4">9.65 nmol/min/mg enzyme</Vmax>
    </kinetics>
    <phDependence>
        <text evidence="4">Optimum pH is 8.</text>
    </phDependence>
    <temperatureDependence>
        <text evidence="4">Optimum temperature is 40-45 degrees Celsius.</text>
    </temperatureDependence>
</comment>
<comment type="subunit">
    <text evidence="4">Monomer.</text>
</comment>
<comment type="subcellular location">
    <subcellularLocation>
        <location evidence="4">Secreted</location>
    </subcellularLocation>
</comment>
<comment type="tissue specificity">
    <text evidence="7">Expressed by the venom gland.</text>
</comment>
<comment type="mass spectrometry" mass="14149.08" method="Electrospray" evidence="4"/>
<comment type="similarity">
    <text evidence="6">Belongs to the phospholipase A2 family. Group II subfamily. D49 sub-subfamily.</text>
</comment>
<feature type="chain" id="PRO_0000452840" description="Basic myotoxic phospholipase A2 PhTX-II" evidence="4">
    <location>
        <begin position="1"/>
        <end position="123"/>
    </location>
</feature>
<feature type="active site" evidence="2">
    <location>
        <position position="48"/>
    </location>
</feature>
<feature type="active site" evidence="2">
    <location>
        <position position="89"/>
    </location>
</feature>
<feature type="binding site" evidence="3">
    <location>
        <position position="27"/>
    </location>
    <ligand>
        <name>Ca(2+)</name>
        <dbReference type="ChEBI" id="CHEBI:29108"/>
    </ligand>
</feature>
<feature type="binding site" evidence="3">
    <location>
        <position position="29"/>
    </location>
    <ligand>
        <name>Ca(2+)</name>
        <dbReference type="ChEBI" id="CHEBI:29108"/>
    </ligand>
</feature>
<feature type="binding site" evidence="3">
    <location>
        <position position="31"/>
    </location>
    <ligand>
        <name>Ca(2+)</name>
        <dbReference type="ChEBI" id="CHEBI:29108"/>
    </ligand>
</feature>
<feature type="binding site" evidence="3">
    <location>
        <position position="49"/>
    </location>
    <ligand>
        <name>Ca(2+)</name>
        <dbReference type="ChEBI" id="CHEBI:29108"/>
    </ligand>
</feature>
<feature type="disulfide bond" evidence="3">
    <location>
        <begin position="26"/>
        <end position="116"/>
    </location>
</feature>
<feature type="disulfide bond" evidence="3">
    <location>
        <begin position="28"/>
        <end position="45"/>
    </location>
</feature>
<feature type="disulfide bond" evidence="3">
    <location>
        <begin position="44"/>
        <end position="95"/>
    </location>
</feature>
<feature type="disulfide bond" evidence="3">
    <location>
        <begin position="50"/>
        <end position="123"/>
    </location>
</feature>
<feature type="disulfide bond" evidence="3">
    <location>
        <begin position="51"/>
        <end position="88"/>
    </location>
</feature>
<feature type="disulfide bond" evidence="3">
    <location>
        <begin position="58"/>
        <end position="81"/>
    </location>
</feature>
<feature type="disulfide bond" evidence="3">
    <location>
        <begin position="75"/>
        <end position="86"/>
    </location>
</feature>
<protein>
    <recommendedName>
        <fullName evidence="5">Basic myotoxic phospholipase A2 PhTX-II</fullName>
        <shortName>svPLA2</shortName>
        <ecNumber evidence="4">3.1.1.4</ecNumber>
    </recommendedName>
    <alternativeName>
        <fullName>Phosphatidylcholine 2-acylhydrolase</fullName>
    </alternativeName>
</protein>
<evidence type="ECO:0000250" key="1"/>
<evidence type="ECO:0000250" key="2">
    <source>
        <dbReference type="UniProtKB" id="P06859"/>
    </source>
</evidence>
<evidence type="ECO:0000250" key="3">
    <source>
        <dbReference type="UniProtKB" id="P62022"/>
    </source>
</evidence>
<evidence type="ECO:0000269" key="4">
    <source>
    </source>
</evidence>
<evidence type="ECO:0000303" key="5">
    <source>
    </source>
</evidence>
<evidence type="ECO:0000305" key="6"/>
<evidence type="ECO:0000305" key="7">
    <source>
    </source>
</evidence>
<reference key="1">
    <citation type="journal article" date="2014" name="Toxins">
        <title>PhTX-II a basic myotoxic phospholipase A(2) from Porthidium hyoprora snake venom, pharmacological characterization and amino acid sequence by mass spectrometry.</title>
        <authorList>
            <person name="Huancahuire-Vega S."/>
            <person name="Ponce-Soto L.A."/>
            <person name="Marangoni S."/>
        </authorList>
    </citation>
    <scope>PROTEIN SEQUENCE</scope>
    <scope>FUNCTION</scope>
    <scope>CATALYTIC ACTIVITY</scope>
    <scope>BIOPHYSICOCHEMICAL PROPERTIES</scope>
    <scope>SUBUNIT</scope>
    <scope>SUBCELLULAR LOCATION</scope>
    <scope>ACTIVITY REGULATION</scope>
    <scope>COFACTOR</scope>
    <scope>MASS SPECTROMETRY</scope>
    <source>
        <tissue>Venom</tissue>
    </source>
</reference>
<keyword id="KW-0106">Calcium</keyword>
<keyword id="KW-0903">Direct protein sequencing</keyword>
<keyword id="KW-1015">Disulfide bond</keyword>
<keyword id="KW-0378">Hydrolase</keyword>
<keyword id="KW-0479">Metal-binding</keyword>
<keyword id="KW-0959">Myotoxin</keyword>
<keyword id="KW-0964">Secreted</keyword>
<keyword id="KW-0800">Toxin</keyword>
<accession>P0DUN1</accession>
<sequence length="123" mass="14159">NLLQFNKMILKETGKNAIPFYAFYGCYCGWGGRGKPKDKTDDRCCFVHDCCYGKLTGCPKWDIYPYSLKSGYITCGKGTWCEEQICECDRAAAICFRENLDTYNKYGYMFYPDSRCKGPSEQC</sequence>
<name>PA22_BOTHY</name>
<organism>
    <name type="scientific">Bothrocophias hyoprora</name>
    <name type="common">Amazonian hognose viper</name>
    <name type="synonym">Porthidium hyoprora</name>
    <dbReference type="NCBI Taxonomy" id="230469"/>
    <lineage>
        <taxon>Eukaryota</taxon>
        <taxon>Metazoa</taxon>
        <taxon>Chordata</taxon>
        <taxon>Craniata</taxon>
        <taxon>Vertebrata</taxon>
        <taxon>Euteleostomi</taxon>
        <taxon>Lepidosauria</taxon>
        <taxon>Squamata</taxon>
        <taxon>Bifurcata</taxon>
        <taxon>Unidentata</taxon>
        <taxon>Episquamata</taxon>
        <taxon>Toxicofera</taxon>
        <taxon>Serpentes</taxon>
        <taxon>Colubroidea</taxon>
        <taxon>Viperidae</taxon>
        <taxon>Crotalinae</taxon>
        <taxon>Bothrocophias</taxon>
    </lineage>
</organism>
<proteinExistence type="evidence at protein level"/>
<dbReference type="EC" id="3.1.1.4" evidence="4"/>
<dbReference type="SMR" id="P0DUN1"/>
<dbReference type="GO" id="GO:0005576">
    <property type="term" value="C:extracellular region"/>
    <property type="evidence" value="ECO:0007669"/>
    <property type="project" value="UniProtKB-SubCell"/>
</dbReference>
<dbReference type="GO" id="GO:0005509">
    <property type="term" value="F:calcium ion binding"/>
    <property type="evidence" value="ECO:0007669"/>
    <property type="project" value="InterPro"/>
</dbReference>
<dbReference type="GO" id="GO:0047498">
    <property type="term" value="F:calcium-dependent phospholipase A2 activity"/>
    <property type="evidence" value="ECO:0007669"/>
    <property type="project" value="TreeGrafter"/>
</dbReference>
<dbReference type="GO" id="GO:0005543">
    <property type="term" value="F:phospholipid binding"/>
    <property type="evidence" value="ECO:0007669"/>
    <property type="project" value="TreeGrafter"/>
</dbReference>
<dbReference type="GO" id="GO:0090729">
    <property type="term" value="F:toxin activity"/>
    <property type="evidence" value="ECO:0007669"/>
    <property type="project" value="UniProtKB-KW"/>
</dbReference>
<dbReference type="GO" id="GO:0050482">
    <property type="term" value="P:arachidonate secretion"/>
    <property type="evidence" value="ECO:0007669"/>
    <property type="project" value="InterPro"/>
</dbReference>
<dbReference type="GO" id="GO:0016042">
    <property type="term" value="P:lipid catabolic process"/>
    <property type="evidence" value="ECO:0007669"/>
    <property type="project" value="InterPro"/>
</dbReference>
<dbReference type="GO" id="GO:0042130">
    <property type="term" value="P:negative regulation of T cell proliferation"/>
    <property type="evidence" value="ECO:0007669"/>
    <property type="project" value="TreeGrafter"/>
</dbReference>
<dbReference type="GO" id="GO:0006644">
    <property type="term" value="P:phospholipid metabolic process"/>
    <property type="evidence" value="ECO:0007669"/>
    <property type="project" value="InterPro"/>
</dbReference>
<dbReference type="CDD" id="cd00125">
    <property type="entry name" value="PLA2c"/>
    <property type="match status" value="1"/>
</dbReference>
<dbReference type="FunFam" id="1.20.90.10:FF:000001">
    <property type="entry name" value="Basic phospholipase A2 homolog"/>
    <property type="match status" value="1"/>
</dbReference>
<dbReference type="Gene3D" id="1.20.90.10">
    <property type="entry name" value="Phospholipase A2 domain"/>
    <property type="match status" value="1"/>
</dbReference>
<dbReference type="InterPro" id="IPR001211">
    <property type="entry name" value="PLipase_A2"/>
</dbReference>
<dbReference type="InterPro" id="IPR033112">
    <property type="entry name" value="PLipase_A2_Asp_AS"/>
</dbReference>
<dbReference type="InterPro" id="IPR016090">
    <property type="entry name" value="PLipase_A2_dom"/>
</dbReference>
<dbReference type="InterPro" id="IPR036444">
    <property type="entry name" value="PLipase_A2_dom_sf"/>
</dbReference>
<dbReference type="InterPro" id="IPR033113">
    <property type="entry name" value="PLipase_A2_His_AS"/>
</dbReference>
<dbReference type="PANTHER" id="PTHR11716">
    <property type="entry name" value="PHOSPHOLIPASE A2 FAMILY MEMBER"/>
    <property type="match status" value="1"/>
</dbReference>
<dbReference type="PANTHER" id="PTHR11716:SF9">
    <property type="entry name" value="PHOSPHOLIPASE A2, MEMBRANE ASSOCIATED"/>
    <property type="match status" value="1"/>
</dbReference>
<dbReference type="Pfam" id="PF00068">
    <property type="entry name" value="Phospholip_A2_1"/>
    <property type="match status" value="1"/>
</dbReference>
<dbReference type="PRINTS" id="PR00389">
    <property type="entry name" value="PHPHLIPASEA2"/>
</dbReference>
<dbReference type="SMART" id="SM00085">
    <property type="entry name" value="PA2c"/>
    <property type="match status" value="1"/>
</dbReference>
<dbReference type="SUPFAM" id="SSF48619">
    <property type="entry name" value="Phospholipase A2, PLA2"/>
    <property type="match status" value="1"/>
</dbReference>
<dbReference type="PROSITE" id="PS00119">
    <property type="entry name" value="PA2_ASP"/>
    <property type="match status" value="1"/>
</dbReference>
<dbReference type="PROSITE" id="PS00118">
    <property type="entry name" value="PA2_HIS"/>
    <property type="match status" value="1"/>
</dbReference>